<proteinExistence type="inferred from homology"/>
<gene>
    <name evidence="1" type="primary">pepB</name>
    <name type="ordered locus">YPTS_2960</name>
</gene>
<name>PEPB_YERPB</name>
<dbReference type="EC" id="3.4.11.23" evidence="1"/>
<dbReference type="EMBL" id="CP001048">
    <property type="protein sequence ID" value="ACC89917.1"/>
    <property type="molecule type" value="Genomic_DNA"/>
</dbReference>
<dbReference type="RefSeq" id="WP_011192810.1">
    <property type="nucleotide sequence ID" value="NZ_CP009780.1"/>
</dbReference>
<dbReference type="SMR" id="B2K9R0"/>
<dbReference type="MEROPS" id="M17.004"/>
<dbReference type="GeneID" id="49785139"/>
<dbReference type="KEGG" id="ypb:YPTS_2960"/>
<dbReference type="PATRIC" id="fig|502801.10.peg.2392"/>
<dbReference type="GO" id="GO:0005737">
    <property type="term" value="C:cytoplasm"/>
    <property type="evidence" value="ECO:0007669"/>
    <property type="project" value="UniProtKB-SubCell"/>
</dbReference>
<dbReference type="GO" id="GO:0030145">
    <property type="term" value="F:manganese ion binding"/>
    <property type="evidence" value="ECO:0007669"/>
    <property type="project" value="UniProtKB-UniRule"/>
</dbReference>
<dbReference type="GO" id="GO:0070006">
    <property type="term" value="F:metalloaminopeptidase activity"/>
    <property type="evidence" value="ECO:0007669"/>
    <property type="project" value="InterPro"/>
</dbReference>
<dbReference type="GO" id="GO:0006508">
    <property type="term" value="P:proteolysis"/>
    <property type="evidence" value="ECO:0007669"/>
    <property type="project" value="UniProtKB-UniRule"/>
</dbReference>
<dbReference type="CDD" id="cd00433">
    <property type="entry name" value="Peptidase_M17"/>
    <property type="match status" value="1"/>
</dbReference>
<dbReference type="FunFam" id="3.40.630.10:FF:000037">
    <property type="entry name" value="Peptidase B"/>
    <property type="match status" value="1"/>
</dbReference>
<dbReference type="Gene3D" id="3.40.630.10">
    <property type="entry name" value="Zn peptidases"/>
    <property type="match status" value="1"/>
</dbReference>
<dbReference type="HAMAP" id="MF_00504">
    <property type="entry name" value="Aminopeptidase_M17"/>
    <property type="match status" value="1"/>
</dbReference>
<dbReference type="InterPro" id="IPR011356">
    <property type="entry name" value="Leucine_aapep/pepB"/>
</dbReference>
<dbReference type="InterPro" id="IPR047620">
    <property type="entry name" value="M17_PepB-like_N"/>
</dbReference>
<dbReference type="InterPro" id="IPR008330">
    <property type="entry name" value="Pept_M17_PepB"/>
</dbReference>
<dbReference type="InterPro" id="IPR000819">
    <property type="entry name" value="Peptidase_M17_C"/>
</dbReference>
<dbReference type="NCBIfam" id="NF003450">
    <property type="entry name" value="PRK05015.1"/>
    <property type="match status" value="1"/>
</dbReference>
<dbReference type="PANTHER" id="PTHR11963">
    <property type="entry name" value="LEUCINE AMINOPEPTIDASE-RELATED"/>
    <property type="match status" value="1"/>
</dbReference>
<dbReference type="PANTHER" id="PTHR11963:SF20">
    <property type="entry name" value="PEPTIDASE B"/>
    <property type="match status" value="1"/>
</dbReference>
<dbReference type="Pfam" id="PF12404">
    <property type="entry name" value="DUF3663"/>
    <property type="match status" value="1"/>
</dbReference>
<dbReference type="Pfam" id="PF00883">
    <property type="entry name" value="Peptidase_M17"/>
    <property type="match status" value="1"/>
</dbReference>
<dbReference type="PIRSF" id="PIRSF036388">
    <property type="entry name" value="Ctsl_amnpptdse_B"/>
    <property type="match status" value="1"/>
</dbReference>
<dbReference type="PRINTS" id="PR00481">
    <property type="entry name" value="LAMNOPPTDASE"/>
</dbReference>
<dbReference type="SUPFAM" id="SSF53187">
    <property type="entry name" value="Zn-dependent exopeptidases"/>
    <property type="match status" value="1"/>
</dbReference>
<dbReference type="PROSITE" id="PS00631">
    <property type="entry name" value="CYTOSOL_AP"/>
    <property type="match status" value="1"/>
</dbReference>
<comment type="function">
    <text evidence="1">Probably plays an important role in intracellular peptide degradation.</text>
</comment>
<comment type="catalytic activity">
    <reaction evidence="1">
        <text>Release of an N-terminal amino acid, Xaa, from a peptide or arylamide. Xaa is preferably Glu or Asp but may be other amino acids, including Leu, Met, His, Cys and Gln.</text>
        <dbReference type="EC" id="3.4.11.23"/>
    </reaction>
</comment>
<comment type="cofactor">
    <cofactor evidence="1">
        <name>Mn(2+)</name>
        <dbReference type="ChEBI" id="CHEBI:29035"/>
    </cofactor>
    <text evidence="1">Binds 2 manganese ions per subunit.</text>
</comment>
<comment type="subunit">
    <text evidence="1">Homohexamer.</text>
</comment>
<comment type="subcellular location">
    <subcellularLocation>
        <location evidence="1">Cytoplasm</location>
    </subcellularLocation>
</comment>
<comment type="similarity">
    <text evidence="1">Belongs to the peptidase M17 family.</text>
</comment>
<organism>
    <name type="scientific">Yersinia pseudotuberculosis serotype IB (strain PB1/+)</name>
    <dbReference type="NCBI Taxonomy" id="502801"/>
    <lineage>
        <taxon>Bacteria</taxon>
        <taxon>Pseudomonadati</taxon>
        <taxon>Pseudomonadota</taxon>
        <taxon>Gammaproteobacteria</taxon>
        <taxon>Enterobacterales</taxon>
        <taxon>Yersiniaceae</taxon>
        <taxon>Yersinia</taxon>
    </lineage>
</organism>
<reference key="1">
    <citation type="submission" date="2008-04" db="EMBL/GenBank/DDBJ databases">
        <title>Complete sequence of Yersinia pseudotuberculosis PB1/+.</title>
        <authorList>
            <person name="Copeland A."/>
            <person name="Lucas S."/>
            <person name="Lapidus A."/>
            <person name="Glavina del Rio T."/>
            <person name="Dalin E."/>
            <person name="Tice H."/>
            <person name="Bruce D."/>
            <person name="Goodwin L."/>
            <person name="Pitluck S."/>
            <person name="Munk A.C."/>
            <person name="Brettin T."/>
            <person name="Detter J.C."/>
            <person name="Han C."/>
            <person name="Tapia R."/>
            <person name="Schmutz J."/>
            <person name="Larimer F."/>
            <person name="Land M."/>
            <person name="Hauser L."/>
            <person name="Challacombe J.F."/>
            <person name="Green L."/>
            <person name="Lindler L.E."/>
            <person name="Nikolich M.P."/>
            <person name="Richardson P."/>
        </authorList>
    </citation>
    <scope>NUCLEOTIDE SEQUENCE [LARGE SCALE GENOMIC DNA]</scope>
    <source>
        <strain>PB1/+</strain>
    </source>
</reference>
<feature type="chain" id="PRO_1000127018" description="Peptidase B">
    <location>
        <begin position="1"/>
        <end position="432"/>
    </location>
</feature>
<feature type="active site" evidence="1">
    <location>
        <position position="208"/>
    </location>
</feature>
<feature type="active site" evidence="1">
    <location>
        <position position="282"/>
    </location>
</feature>
<feature type="binding site" evidence="1">
    <location>
        <position position="196"/>
    </location>
    <ligand>
        <name>Mn(2+)</name>
        <dbReference type="ChEBI" id="CHEBI:29035"/>
        <label>2</label>
    </ligand>
</feature>
<feature type="binding site" evidence="1">
    <location>
        <position position="201"/>
    </location>
    <ligand>
        <name>Mn(2+)</name>
        <dbReference type="ChEBI" id="CHEBI:29035"/>
        <label>1</label>
    </ligand>
</feature>
<feature type="binding site" evidence="1">
    <location>
        <position position="201"/>
    </location>
    <ligand>
        <name>Mn(2+)</name>
        <dbReference type="ChEBI" id="CHEBI:29035"/>
        <label>2</label>
    </ligand>
</feature>
<feature type="binding site" evidence="1">
    <location>
        <position position="219"/>
    </location>
    <ligand>
        <name>Mn(2+)</name>
        <dbReference type="ChEBI" id="CHEBI:29035"/>
        <label>2</label>
    </ligand>
</feature>
<feature type="binding site" evidence="1">
    <location>
        <position position="278"/>
    </location>
    <ligand>
        <name>Mn(2+)</name>
        <dbReference type="ChEBI" id="CHEBI:29035"/>
        <label>1</label>
    </ligand>
</feature>
<feature type="binding site" evidence="1">
    <location>
        <position position="280"/>
    </location>
    <ligand>
        <name>Mn(2+)</name>
        <dbReference type="ChEBI" id="CHEBI:29035"/>
        <label>1</label>
    </ligand>
</feature>
<feature type="binding site" evidence="1">
    <location>
        <position position="280"/>
    </location>
    <ligand>
        <name>Mn(2+)</name>
        <dbReference type="ChEBI" id="CHEBI:29035"/>
        <label>2</label>
    </ligand>
</feature>
<sequence length="432" mass="46531">MTTEIMQISLSHNPADARWGEKALISTNDQGVTIHLTSHDQLGGIQRAARKIDGQGIKQVKLAGEGWGLEQSWAFWQGFRGPKGQRSVVWAELPANEKTELEQRLQIIDWVRDTINAPAEDLGPEQLAKNAIDLLCAVSCDAVSYRITKGEDLREQNYAGIYTVGRGSDRAPVLLALDYNPTGNPDAPVMACLVGKGITFDSGGYSLKQSAFMDSMKSDMGGAATLTGALALAAARGLKERVKLYLCCADNMVSGNAFKLGDIIRYRNGKTVEIMNTDAEGRLVLADGLIDASEQNAPLIIDAATLTGAAKTALGNDYHALFSFDDELAQALLNSAHSEHELFWRLPLAEFHRSQLPSNFAELNNVAGGAYSAGASTAAAFLSHFVKNYQQGWLHIDCSATYRKSAVDQWSAGATGLGVRTVANLLLAQAKQ</sequence>
<keyword id="KW-0031">Aminopeptidase</keyword>
<keyword id="KW-0963">Cytoplasm</keyword>
<keyword id="KW-0378">Hydrolase</keyword>
<keyword id="KW-0464">Manganese</keyword>
<keyword id="KW-0479">Metal-binding</keyword>
<keyword id="KW-0645">Protease</keyword>
<protein>
    <recommendedName>
        <fullName evidence="1">Peptidase B</fullName>
        <ecNumber evidence="1">3.4.11.23</ecNumber>
    </recommendedName>
    <alternativeName>
        <fullName evidence="1">Aminopeptidase B</fullName>
    </alternativeName>
</protein>
<evidence type="ECO:0000255" key="1">
    <source>
        <dbReference type="HAMAP-Rule" id="MF_00504"/>
    </source>
</evidence>
<accession>B2K9R0</accession>